<evidence type="ECO:0000250" key="1"/>
<evidence type="ECO:0000255" key="2"/>
<evidence type="ECO:0000255" key="3">
    <source>
        <dbReference type="PROSITE-ProRule" id="PRU00274"/>
    </source>
</evidence>
<evidence type="ECO:0000305" key="4"/>
<sequence>MLRLLSSLLLVALASGCGQPSHNPSSRVVNGEEAVPHSWPWQVSLQYEKDGSFHHTCGGSLITPDWVLTAGHCISTSRTYQVVLGEHERGVEEGQEQVIPINAGDLFVHPKWNSMCVSCGNDIALVKLSRSAQLGDAVQLACLPPAGEILPNGAPCYISGWGRLSTNGPLPDKLQQALLPVVDYEHCSRWNWWGLSVKTTMVCAGGDIQSGCNGDSGGPLNCPADNGTWQVHGVTSFVSSLGCNTLRKPTVFTRVSAFIDWIEETIANN</sequence>
<dbReference type="EC" id="3.4.21.70"/>
<dbReference type="EMBL" id="AK008858">
    <property type="protein sequence ID" value="BAB25932.1"/>
    <property type="molecule type" value="mRNA"/>
</dbReference>
<dbReference type="EMBL" id="AK009129">
    <property type="protein sequence ID" value="BAB26092.1"/>
    <property type="molecule type" value="mRNA"/>
</dbReference>
<dbReference type="EMBL" id="AK010149">
    <property type="protein sequence ID" value="BAB26734.1"/>
    <property type="molecule type" value="mRNA"/>
</dbReference>
<dbReference type="EMBL" id="AL645468">
    <property type="status" value="NOT_ANNOTATED_CDS"/>
    <property type="molecule type" value="Genomic_DNA"/>
</dbReference>
<dbReference type="EMBL" id="BC056210">
    <property type="protein sequence ID" value="AAH56210.1"/>
    <property type="status" value="ALT_INIT"/>
    <property type="molecule type" value="mRNA"/>
</dbReference>
<dbReference type="EMBL" id="BC061066">
    <property type="protein sequence ID" value="AAH61066.1"/>
    <property type="molecule type" value="mRNA"/>
</dbReference>
<dbReference type="CCDS" id="CCDS18817.1"/>
<dbReference type="RefSeq" id="NP_080695.1">
    <property type="nucleotide sequence ID" value="NM_026419.2"/>
</dbReference>
<dbReference type="SMR" id="Q9CQ52"/>
<dbReference type="FunCoup" id="Q9CQ52">
    <property type="interactions" value="298"/>
</dbReference>
<dbReference type="STRING" id="10090.ENSMUSP00000099581"/>
<dbReference type="MEROPS" id="S01.983"/>
<dbReference type="PhosphoSitePlus" id="Q9CQ52"/>
<dbReference type="PaxDb" id="10090-ENSMUSP00000099581"/>
<dbReference type="PeptideAtlas" id="Q9CQ52"/>
<dbReference type="ProteomicsDB" id="279997"/>
<dbReference type="DNASU" id="67868"/>
<dbReference type="Ensembl" id="ENSMUST00000102522.5">
    <property type="protein sequence ID" value="ENSMUSP00000099581.5"/>
    <property type="gene ID" value="ENSMUSG00000023433.9"/>
</dbReference>
<dbReference type="GeneID" id="67868"/>
<dbReference type="KEGG" id="mmu:67868"/>
<dbReference type="UCSC" id="uc008vja.1">
    <property type="organism name" value="mouse"/>
</dbReference>
<dbReference type="AGR" id="MGI:1915118"/>
<dbReference type="CTD" id="23436"/>
<dbReference type="MGI" id="MGI:1915118">
    <property type="gene designation" value="Cela3b"/>
</dbReference>
<dbReference type="VEuPathDB" id="HostDB:ENSMUSG00000023433"/>
<dbReference type="eggNOG" id="KOG3627">
    <property type="taxonomic scope" value="Eukaryota"/>
</dbReference>
<dbReference type="GeneTree" id="ENSGT01030000234528"/>
<dbReference type="HOGENOM" id="CLU_006842_0_4_1"/>
<dbReference type="InParanoid" id="Q9CQ52"/>
<dbReference type="OMA" id="KNGSFHH"/>
<dbReference type="OrthoDB" id="10061449at2759"/>
<dbReference type="PhylomeDB" id="Q9CQ52"/>
<dbReference type="TreeFam" id="TF330455"/>
<dbReference type="BioGRID-ORCS" id="67868">
    <property type="hits" value="1 hit in 76 CRISPR screens"/>
</dbReference>
<dbReference type="ChiTaRS" id="Cela3b">
    <property type="organism name" value="mouse"/>
</dbReference>
<dbReference type="PRO" id="PR:Q9CQ52"/>
<dbReference type="Proteomes" id="UP000000589">
    <property type="component" value="Chromosome 4"/>
</dbReference>
<dbReference type="RNAct" id="Q9CQ52">
    <property type="molecule type" value="protein"/>
</dbReference>
<dbReference type="Bgee" id="ENSMUSG00000023433">
    <property type="expression patterns" value="Expressed in pyloric antrum and 41 other cell types or tissues"/>
</dbReference>
<dbReference type="GO" id="GO:0062023">
    <property type="term" value="C:collagen-containing extracellular matrix"/>
    <property type="evidence" value="ECO:0007005"/>
    <property type="project" value="BHF-UCL"/>
</dbReference>
<dbReference type="GO" id="GO:0004252">
    <property type="term" value="F:serine-type endopeptidase activity"/>
    <property type="evidence" value="ECO:0007669"/>
    <property type="project" value="InterPro"/>
</dbReference>
<dbReference type="GO" id="GO:0006508">
    <property type="term" value="P:proteolysis"/>
    <property type="evidence" value="ECO:0007669"/>
    <property type="project" value="UniProtKB-KW"/>
</dbReference>
<dbReference type="CDD" id="cd00190">
    <property type="entry name" value="Tryp_SPc"/>
    <property type="match status" value="1"/>
</dbReference>
<dbReference type="FunFam" id="2.40.10.10:FF:000280">
    <property type="match status" value="1"/>
</dbReference>
<dbReference type="FunFam" id="2.40.10.10:FF:000004">
    <property type="entry name" value="Tryptase gamma 1"/>
    <property type="match status" value="1"/>
</dbReference>
<dbReference type="Gene3D" id="2.40.10.10">
    <property type="entry name" value="Trypsin-like serine proteases"/>
    <property type="match status" value="2"/>
</dbReference>
<dbReference type="InterPro" id="IPR050850">
    <property type="entry name" value="Peptidase_S1_Elastase_sf"/>
</dbReference>
<dbReference type="InterPro" id="IPR009003">
    <property type="entry name" value="Peptidase_S1_PA"/>
</dbReference>
<dbReference type="InterPro" id="IPR043504">
    <property type="entry name" value="Peptidase_S1_PA_chymotrypsin"/>
</dbReference>
<dbReference type="InterPro" id="IPR001314">
    <property type="entry name" value="Peptidase_S1A"/>
</dbReference>
<dbReference type="InterPro" id="IPR001254">
    <property type="entry name" value="Trypsin_dom"/>
</dbReference>
<dbReference type="InterPro" id="IPR018114">
    <property type="entry name" value="TRYPSIN_HIS"/>
</dbReference>
<dbReference type="InterPro" id="IPR033116">
    <property type="entry name" value="TRYPSIN_SER"/>
</dbReference>
<dbReference type="PANTHER" id="PTHR24257">
    <property type="entry name" value="CHYMOTRYPSIN-LIKE ELASTASE FAMILY MEMBER"/>
    <property type="match status" value="1"/>
</dbReference>
<dbReference type="PANTHER" id="PTHR24257:SF22">
    <property type="entry name" value="CHYMOTRYPSIN-LIKE ELASTASE FAMILY MEMBER 3B"/>
    <property type="match status" value="1"/>
</dbReference>
<dbReference type="Pfam" id="PF00089">
    <property type="entry name" value="Trypsin"/>
    <property type="match status" value="1"/>
</dbReference>
<dbReference type="PRINTS" id="PR00722">
    <property type="entry name" value="CHYMOTRYPSIN"/>
</dbReference>
<dbReference type="SMART" id="SM00020">
    <property type="entry name" value="Tryp_SPc"/>
    <property type="match status" value="1"/>
</dbReference>
<dbReference type="SUPFAM" id="SSF50494">
    <property type="entry name" value="Trypsin-like serine proteases"/>
    <property type="match status" value="1"/>
</dbReference>
<dbReference type="PROSITE" id="PS50240">
    <property type="entry name" value="TRYPSIN_DOM"/>
    <property type="match status" value="1"/>
</dbReference>
<dbReference type="PROSITE" id="PS00134">
    <property type="entry name" value="TRYPSIN_HIS"/>
    <property type="match status" value="1"/>
</dbReference>
<dbReference type="PROSITE" id="PS00135">
    <property type="entry name" value="TRYPSIN_SER"/>
    <property type="match status" value="1"/>
</dbReference>
<accession>Q9CQ52</accession>
<accession>Q7TNI0</accession>
<accession>Q9D7T9</accession>
<name>CEL3B_MOUSE</name>
<keyword id="KW-1015">Disulfide bond</keyword>
<keyword id="KW-0378">Hydrolase</keyword>
<keyword id="KW-0645">Protease</keyword>
<keyword id="KW-1185">Reference proteome</keyword>
<keyword id="KW-0720">Serine protease</keyword>
<keyword id="KW-0732">Signal</keyword>
<keyword id="KW-0865">Zymogen</keyword>
<organism>
    <name type="scientific">Mus musculus</name>
    <name type="common">Mouse</name>
    <dbReference type="NCBI Taxonomy" id="10090"/>
    <lineage>
        <taxon>Eukaryota</taxon>
        <taxon>Metazoa</taxon>
        <taxon>Chordata</taxon>
        <taxon>Craniata</taxon>
        <taxon>Vertebrata</taxon>
        <taxon>Euteleostomi</taxon>
        <taxon>Mammalia</taxon>
        <taxon>Eutheria</taxon>
        <taxon>Euarchontoglires</taxon>
        <taxon>Glires</taxon>
        <taxon>Rodentia</taxon>
        <taxon>Myomorpha</taxon>
        <taxon>Muroidea</taxon>
        <taxon>Muridae</taxon>
        <taxon>Murinae</taxon>
        <taxon>Mus</taxon>
        <taxon>Mus</taxon>
    </lineage>
</organism>
<feature type="signal peptide" evidence="2">
    <location>
        <begin position="1"/>
        <end position="16"/>
    </location>
</feature>
<feature type="propeptide" id="PRO_0000416105" description="Activation peptide" evidence="2">
    <location>
        <begin position="17"/>
        <end position="27"/>
    </location>
</feature>
<feature type="chain" id="PRO_0000416106" description="Chymotrypsin-like elastase family member 3B">
    <location>
        <begin position="28"/>
        <end position="269"/>
    </location>
</feature>
<feature type="domain" description="Peptidase S1" evidence="3">
    <location>
        <begin position="28"/>
        <end position="267"/>
    </location>
</feature>
<feature type="active site" description="Charge relay system" evidence="1">
    <location>
        <position position="72"/>
    </location>
</feature>
<feature type="active site" description="Charge relay system" evidence="1">
    <location>
        <position position="122"/>
    </location>
</feature>
<feature type="active site" description="Charge relay system" evidence="1">
    <location>
        <position position="216"/>
    </location>
</feature>
<feature type="disulfide bond" evidence="3">
    <location>
        <begin position="57"/>
        <end position="73"/>
    </location>
</feature>
<feature type="disulfide bond" evidence="3">
    <location>
        <begin position="156"/>
        <end position="222"/>
    </location>
</feature>
<feature type="disulfide bond" evidence="3">
    <location>
        <begin position="187"/>
        <end position="203"/>
    </location>
</feature>
<feature type="disulfide bond" evidence="3">
    <location>
        <begin position="212"/>
        <end position="243"/>
    </location>
</feature>
<feature type="sequence conflict" description="In Ref. 1; BAB25932." evidence="4" ref="1">
    <original>G</original>
    <variation>E</variation>
    <location>
        <position position="18"/>
    </location>
</feature>
<proteinExistence type="evidence at protein level"/>
<gene>
    <name type="primary">Cela3b</name>
    <name type="synonym">Ela3</name>
    <name type="synonym">Ela3b</name>
</gene>
<protein>
    <recommendedName>
        <fullName>Chymotrypsin-like elastase family member 3B</fullName>
        <ecNumber>3.4.21.70</ecNumber>
    </recommendedName>
    <alternativeName>
        <fullName>Elastase IIIB</fullName>
    </alternativeName>
    <alternativeName>
        <fullName>Elastase-3B</fullName>
    </alternativeName>
    <alternativeName>
        <fullName>Protease E</fullName>
    </alternativeName>
</protein>
<comment type="function">
    <text evidence="1">Efficient protease with alanine specificity but only little elastolytic activity.</text>
</comment>
<comment type="catalytic activity">
    <reaction>
        <text>Preferential cleavage: Ala-|-Xaa. Does not hydrolyze elastin.</text>
        <dbReference type="EC" id="3.4.21.70"/>
    </reaction>
</comment>
<comment type="similarity">
    <text evidence="3">Belongs to the peptidase S1 family. Elastase subfamily.</text>
</comment>
<comment type="sequence caution" evidence="4">
    <conflict type="erroneous initiation">
        <sequence resource="EMBL-CDS" id="AAH56210"/>
    </conflict>
    <text>Extended N-terminus.</text>
</comment>
<reference key="1">
    <citation type="journal article" date="2005" name="Science">
        <title>The transcriptional landscape of the mammalian genome.</title>
        <authorList>
            <person name="Carninci P."/>
            <person name="Kasukawa T."/>
            <person name="Katayama S."/>
            <person name="Gough J."/>
            <person name="Frith M.C."/>
            <person name="Maeda N."/>
            <person name="Oyama R."/>
            <person name="Ravasi T."/>
            <person name="Lenhard B."/>
            <person name="Wells C."/>
            <person name="Kodzius R."/>
            <person name="Shimokawa K."/>
            <person name="Bajic V.B."/>
            <person name="Brenner S.E."/>
            <person name="Batalov S."/>
            <person name="Forrest A.R."/>
            <person name="Zavolan M."/>
            <person name="Davis M.J."/>
            <person name="Wilming L.G."/>
            <person name="Aidinis V."/>
            <person name="Allen J.E."/>
            <person name="Ambesi-Impiombato A."/>
            <person name="Apweiler R."/>
            <person name="Aturaliya R.N."/>
            <person name="Bailey T.L."/>
            <person name="Bansal M."/>
            <person name="Baxter L."/>
            <person name="Beisel K.W."/>
            <person name="Bersano T."/>
            <person name="Bono H."/>
            <person name="Chalk A.M."/>
            <person name="Chiu K.P."/>
            <person name="Choudhary V."/>
            <person name="Christoffels A."/>
            <person name="Clutterbuck D.R."/>
            <person name="Crowe M.L."/>
            <person name="Dalla E."/>
            <person name="Dalrymple B.P."/>
            <person name="de Bono B."/>
            <person name="Della Gatta G."/>
            <person name="di Bernardo D."/>
            <person name="Down T."/>
            <person name="Engstrom P."/>
            <person name="Fagiolini M."/>
            <person name="Faulkner G."/>
            <person name="Fletcher C.F."/>
            <person name="Fukushima T."/>
            <person name="Furuno M."/>
            <person name="Futaki S."/>
            <person name="Gariboldi M."/>
            <person name="Georgii-Hemming P."/>
            <person name="Gingeras T.R."/>
            <person name="Gojobori T."/>
            <person name="Green R.E."/>
            <person name="Gustincich S."/>
            <person name="Harbers M."/>
            <person name="Hayashi Y."/>
            <person name="Hensch T.K."/>
            <person name="Hirokawa N."/>
            <person name="Hill D."/>
            <person name="Huminiecki L."/>
            <person name="Iacono M."/>
            <person name="Ikeo K."/>
            <person name="Iwama A."/>
            <person name="Ishikawa T."/>
            <person name="Jakt M."/>
            <person name="Kanapin A."/>
            <person name="Katoh M."/>
            <person name="Kawasawa Y."/>
            <person name="Kelso J."/>
            <person name="Kitamura H."/>
            <person name="Kitano H."/>
            <person name="Kollias G."/>
            <person name="Krishnan S.P."/>
            <person name="Kruger A."/>
            <person name="Kummerfeld S.K."/>
            <person name="Kurochkin I.V."/>
            <person name="Lareau L.F."/>
            <person name="Lazarevic D."/>
            <person name="Lipovich L."/>
            <person name="Liu J."/>
            <person name="Liuni S."/>
            <person name="McWilliam S."/>
            <person name="Madan Babu M."/>
            <person name="Madera M."/>
            <person name="Marchionni L."/>
            <person name="Matsuda H."/>
            <person name="Matsuzawa S."/>
            <person name="Miki H."/>
            <person name="Mignone F."/>
            <person name="Miyake S."/>
            <person name="Morris K."/>
            <person name="Mottagui-Tabar S."/>
            <person name="Mulder N."/>
            <person name="Nakano N."/>
            <person name="Nakauchi H."/>
            <person name="Ng P."/>
            <person name="Nilsson R."/>
            <person name="Nishiguchi S."/>
            <person name="Nishikawa S."/>
            <person name="Nori F."/>
            <person name="Ohara O."/>
            <person name="Okazaki Y."/>
            <person name="Orlando V."/>
            <person name="Pang K.C."/>
            <person name="Pavan W.J."/>
            <person name="Pavesi G."/>
            <person name="Pesole G."/>
            <person name="Petrovsky N."/>
            <person name="Piazza S."/>
            <person name="Reed J."/>
            <person name="Reid J.F."/>
            <person name="Ring B.Z."/>
            <person name="Ringwald M."/>
            <person name="Rost B."/>
            <person name="Ruan Y."/>
            <person name="Salzberg S.L."/>
            <person name="Sandelin A."/>
            <person name="Schneider C."/>
            <person name="Schoenbach C."/>
            <person name="Sekiguchi K."/>
            <person name="Semple C.A."/>
            <person name="Seno S."/>
            <person name="Sessa L."/>
            <person name="Sheng Y."/>
            <person name="Shibata Y."/>
            <person name="Shimada H."/>
            <person name="Shimada K."/>
            <person name="Silva D."/>
            <person name="Sinclair B."/>
            <person name="Sperling S."/>
            <person name="Stupka E."/>
            <person name="Sugiura K."/>
            <person name="Sultana R."/>
            <person name="Takenaka Y."/>
            <person name="Taki K."/>
            <person name="Tammoja K."/>
            <person name="Tan S.L."/>
            <person name="Tang S."/>
            <person name="Taylor M.S."/>
            <person name="Tegner J."/>
            <person name="Teichmann S.A."/>
            <person name="Ueda H.R."/>
            <person name="van Nimwegen E."/>
            <person name="Verardo R."/>
            <person name="Wei C.L."/>
            <person name="Yagi K."/>
            <person name="Yamanishi H."/>
            <person name="Zabarovsky E."/>
            <person name="Zhu S."/>
            <person name="Zimmer A."/>
            <person name="Hide W."/>
            <person name="Bult C."/>
            <person name="Grimmond S.M."/>
            <person name="Teasdale R.D."/>
            <person name="Liu E.T."/>
            <person name="Brusic V."/>
            <person name="Quackenbush J."/>
            <person name="Wahlestedt C."/>
            <person name="Mattick J.S."/>
            <person name="Hume D.A."/>
            <person name="Kai C."/>
            <person name="Sasaki D."/>
            <person name="Tomaru Y."/>
            <person name="Fukuda S."/>
            <person name="Kanamori-Katayama M."/>
            <person name="Suzuki M."/>
            <person name="Aoki J."/>
            <person name="Arakawa T."/>
            <person name="Iida J."/>
            <person name="Imamura K."/>
            <person name="Itoh M."/>
            <person name="Kato T."/>
            <person name="Kawaji H."/>
            <person name="Kawagashira N."/>
            <person name="Kawashima T."/>
            <person name="Kojima M."/>
            <person name="Kondo S."/>
            <person name="Konno H."/>
            <person name="Nakano K."/>
            <person name="Ninomiya N."/>
            <person name="Nishio T."/>
            <person name="Okada M."/>
            <person name="Plessy C."/>
            <person name="Shibata K."/>
            <person name="Shiraki T."/>
            <person name="Suzuki S."/>
            <person name="Tagami M."/>
            <person name="Waki K."/>
            <person name="Watahiki A."/>
            <person name="Okamura-Oho Y."/>
            <person name="Suzuki H."/>
            <person name="Kawai J."/>
            <person name="Hayashizaki Y."/>
        </authorList>
    </citation>
    <scope>NUCLEOTIDE SEQUENCE [LARGE SCALE MRNA]</scope>
    <source>
        <strain>C57BL/6J</strain>
        <tissue>Stomach</tissue>
        <tissue>Tongue</tissue>
    </source>
</reference>
<reference key="2">
    <citation type="journal article" date="2009" name="PLoS Biol.">
        <title>Lineage-specific biology revealed by a finished genome assembly of the mouse.</title>
        <authorList>
            <person name="Church D.M."/>
            <person name="Goodstadt L."/>
            <person name="Hillier L.W."/>
            <person name="Zody M.C."/>
            <person name="Goldstein S."/>
            <person name="She X."/>
            <person name="Bult C.J."/>
            <person name="Agarwala R."/>
            <person name="Cherry J.L."/>
            <person name="DiCuccio M."/>
            <person name="Hlavina W."/>
            <person name="Kapustin Y."/>
            <person name="Meric P."/>
            <person name="Maglott D."/>
            <person name="Birtle Z."/>
            <person name="Marques A.C."/>
            <person name="Graves T."/>
            <person name="Zhou S."/>
            <person name="Teague B."/>
            <person name="Potamousis K."/>
            <person name="Churas C."/>
            <person name="Place M."/>
            <person name="Herschleb J."/>
            <person name="Runnheim R."/>
            <person name="Forrest D."/>
            <person name="Amos-Landgraf J."/>
            <person name="Schwartz D.C."/>
            <person name="Cheng Z."/>
            <person name="Lindblad-Toh K."/>
            <person name="Eichler E.E."/>
            <person name="Ponting C.P."/>
        </authorList>
    </citation>
    <scope>NUCLEOTIDE SEQUENCE [LARGE SCALE GENOMIC DNA]</scope>
    <source>
        <strain>C57BL/6J</strain>
    </source>
</reference>
<reference key="3">
    <citation type="journal article" date="2004" name="Genome Res.">
        <title>The status, quality, and expansion of the NIH full-length cDNA project: the Mammalian Gene Collection (MGC).</title>
        <authorList>
            <consortium name="The MGC Project Team"/>
        </authorList>
    </citation>
    <scope>NUCLEOTIDE SEQUENCE [LARGE SCALE MRNA]</scope>
    <source>
        <tissue>Liver</tissue>
        <tissue>Pancreas</tissue>
    </source>
</reference>
<reference key="4">
    <citation type="journal article" date="2010" name="Cell">
        <title>A tissue-specific atlas of mouse protein phosphorylation and expression.</title>
        <authorList>
            <person name="Huttlin E.L."/>
            <person name="Jedrychowski M.P."/>
            <person name="Elias J.E."/>
            <person name="Goswami T."/>
            <person name="Rad R."/>
            <person name="Beausoleil S.A."/>
            <person name="Villen J."/>
            <person name="Haas W."/>
            <person name="Sowa M.E."/>
            <person name="Gygi S.P."/>
        </authorList>
    </citation>
    <scope>IDENTIFICATION BY MASS SPECTROMETRY [LARGE SCALE ANALYSIS]</scope>
    <source>
        <tissue>Liver</tissue>
        <tissue>Pancreas</tissue>
        <tissue>Spleen</tissue>
    </source>
</reference>